<evidence type="ECO:0000255" key="1">
    <source>
        <dbReference type="HAMAP-Rule" id="MF_00318"/>
    </source>
</evidence>
<name>ENO_STRM5</name>
<protein>
    <recommendedName>
        <fullName evidence="1">Enolase</fullName>
        <ecNumber evidence="1">4.2.1.11</ecNumber>
    </recommendedName>
    <alternativeName>
        <fullName evidence="1">2-phospho-D-glycerate hydro-lyase</fullName>
    </alternativeName>
    <alternativeName>
        <fullName evidence="1">2-phosphoglycerate dehydratase</fullName>
    </alternativeName>
</protein>
<comment type="function">
    <text evidence="1">Catalyzes the reversible conversion of 2-phosphoglycerate (2-PG) into phosphoenolpyruvate (PEP). It is essential for the degradation of carbohydrates via glycolysis.</text>
</comment>
<comment type="catalytic activity">
    <reaction evidence="1">
        <text>(2R)-2-phosphoglycerate = phosphoenolpyruvate + H2O</text>
        <dbReference type="Rhea" id="RHEA:10164"/>
        <dbReference type="ChEBI" id="CHEBI:15377"/>
        <dbReference type="ChEBI" id="CHEBI:58289"/>
        <dbReference type="ChEBI" id="CHEBI:58702"/>
        <dbReference type="EC" id="4.2.1.11"/>
    </reaction>
</comment>
<comment type="cofactor">
    <cofactor evidence="1">
        <name>Mg(2+)</name>
        <dbReference type="ChEBI" id="CHEBI:18420"/>
    </cofactor>
    <text evidence="1">Binds a second Mg(2+) ion via substrate during catalysis.</text>
</comment>
<comment type="pathway">
    <text evidence="1">Carbohydrate degradation; glycolysis; pyruvate from D-glyceraldehyde 3-phosphate: step 4/5.</text>
</comment>
<comment type="subunit">
    <text evidence="1">Component of the RNA degradosome, a multiprotein complex involved in RNA processing and mRNA degradation.</text>
</comment>
<comment type="subcellular location">
    <subcellularLocation>
        <location evidence="1">Cytoplasm</location>
    </subcellularLocation>
    <subcellularLocation>
        <location evidence="1">Secreted</location>
    </subcellularLocation>
    <subcellularLocation>
        <location evidence="1">Cell surface</location>
    </subcellularLocation>
    <text evidence="1">Fractions of enolase are present in both the cytoplasm and on the cell surface.</text>
</comment>
<comment type="similarity">
    <text evidence="1">Belongs to the enolase family.</text>
</comment>
<feature type="chain" id="PRO_1000115917" description="Enolase">
    <location>
        <begin position="1"/>
        <end position="430"/>
    </location>
</feature>
<feature type="active site" description="Proton donor" evidence="1">
    <location>
        <position position="207"/>
    </location>
</feature>
<feature type="active site" description="Proton acceptor" evidence="1">
    <location>
        <position position="339"/>
    </location>
</feature>
<feature type="binding site" evidence="1">
    <location>
        <position position="165"/>
    </location>
    <ligand>
        <name>(2R)-2-phosphoglycerate</name>
        <dbReference type="ChEBI" id="CHEBI:58289"/>
    </ligand>
</feature>
<feature type="binding site" evidence="1">
    <location>
        <position position="244"/>
    </location>
    <ligand>
        <name>Mg(2+)</name>
        <dbReference type="ChEBI" id="CHEBI:18420"/>
    </ligand>
</feature>
<feature type="binding site" evidence="1">
    <location>
        <position position="287"/>
    </location>
    <ligand>
        <name>Mg(2+)</name>
        <dbReference type="ChEBI" id="CHEBI:18420"/>
    </ligand>
</feature>
<feature type="binding site" evidence="1">
    <location>
        <position position="314"/>
    </location>
    <ligand>
        <name>Mg(2+)</name>
        <dbReference type="ChEBI" id="CHEBI:18420"/>
    </ligand>
</feature>
<feature type="binding site" evidence="1">
    <location>
        <position position="339"/>
    </location>
    <ligand>
        <name>(2R)-2-phosphoglycerate</name>
        <dbReference type="ChEBI" id="CHEBI:58289"/>
    </ligand>
</feature>
<feature type="binding site" evidence="1">
    <location>
        <position position="368"/>
    </location>
    <ligand>
        <name>(2R)-2-phosphoglycerate</name>
        <dbReference type="ChEBI" id="CHEBI:58289"/>
    </ligand>
</feature>
<feature type="binding site" evidence="1">
    <location>
        <position position="369"/>
    </location>
    <ligand>
        <name>(2R)-2-phosphoglycerate</name>
        <dbReference type="ChEBI" id="CHEBI:58289"/>
    </ligand>
</feature>
<feature type="binding site" evidence="1">
    <location>
        <position position="390"/>
    </location>
    <ligand>
        <name>(2R)-2-phosphoglycerate</name>
        <dbReference type="ChEBI" id="CHEBI:58289"/>
    </ligand>
</feature>
<dbReference type="EC" id="4.2.1.11" evidence="1"/>
<dbReference type="EMBL" id="CP001111">
    <property type="protein sequence ID" value="ACF51157.1"/>
    <property type="molecule type" value="Genomic_DNA"/>
</dbReference>
<dbReference type="RefSeq" id="WP_004152845.1">
    <property type="nucleotide sequence ID" value="NC_011071.1"/>
</dbReference>
<dbReference type="SMR" id="B4SR86"/>
<dbReference type="STRING" id="391008.Smal_1452"/>
<dbReference type="KEGG" id="smt:Smal_1452"/>
<dbReference type="eggNOG" id="COG0148">
    <property type="taxonomic scope" value="Bacteria"/>
</dbReference>
<dbReference type="HOGENOM" id="CLU_031223_2_1_6"/>
<dbReference type="OrthoDB" id="9804716at2"/>
<dbReference type="UniPathway" id="UPA00109">
    <property type="reaction ID" value="UER00187"/>
</dbReference>
<dbReference type="Proteomes" id="UP000001867">
    <property type="component" value="Chromosome"/>
</dbReference>
<dbReference type="GO" id="GO:0009986">
    <property type="term" value="C:cell surface"/>
    <property type="evidence" value="ECO:0007669"/>
    <property type="project" value="UniProtKB-SubCell"/>
</dbReference>
<dbReference type="GO" id="GO:0005576">
    <property type="term" value="C:extracellular region"/>
    <property type="evidence" value="ECO:0007669"/>
    <property type="project" value="UniProtKB-SubCell"/>
</dbReference>
<dbReference type="GO" id="GO:0000015">
    <property type="term" value="C:phosphopyruvate hydratase complex"/>
    <property type="evidence" value="ECO:0007669"/>
    <property type="project" value="InterPro"/>
</dbReference>
<dbReference type="GO" id="GO:0000287">
    <property type="term" value="F:magnesium ion binding"/>
    <property type="evidence" value="ECO:0007669"/>
    <property type="project" value="UniProtKB-UniRule"/>
</dbReference>
<dbReference type="GO" id="GO:0004634">
    <property type="term" value="F:phosphopyruvate hydratase activity"/>
    <property type="evidence" value="ECO:0007669"/>
    <property type="project" value="UniProtKB-UniRule"/>
</dbReference>
<dbReference type="GO" id="GO:0006096">
    <property type="term" value="P:glycolytic process"/>
    <property type="evidence" value="ECO:0007669"/>
    <property type="project" value="UniProtKB-UniRule"/>
</dbReference>
<dbReference type="CDD" id="cd03313">
    <property type="entry name" value="enolase"/>
    <property type="match status" value="1"/>
</dbReference>
<dbReference type="FunFam" id="3.20.20.120:FF:000001">
    <property type="entry name" value="Enolase"/>
    <property type="match status" value="1"/>
</dbReference>
<dbReference type="FunFam" id="3.30.390.10:FF:000001">
    <property type="entry name" value="Enolase"/>
    <property type="match status" value="1"/>
</dbReference>
<dbReference type="Gene3D" id="3.20.20.120">
    <property type="entry name" value="Enolase-like C-terminal domain"/>
    <property type="match status" value="1"/>
</dbReference>
<dbReference type="Gene3D" id="3.30.390.10">
    <property type="entry name" value="Enolase-like, N-terminal domain"/>
    <property type="match status" value="1"/>
</dbReference>
<dbReference type="HAMAP" id="MF_00318">
    <property type="entry name" value="Enolase"/>
    <property type="match status" value="1"/>
</dbReference>
<dbReference type="InterPro" id="IPR000941">
    <property type="entry name" value="Enolase"/>
</dbReference>
<dbReference type="InterPro" id="IPR036849">
    <property type="entry name" value="Enolase-like_C_sf"/>
</dbReference>
<dbReference type="InterPro" id="IPR029017">
    <property type="entry name" value="Enolase-like_N"/>
</dbReference>
<dbReference type="InterPro" id="IPR020810">
    <property type="entry name" value="Enolase_C"/>
</dbReference>
<dbReference type="InterPro" id="IPR020809">
    <property type="entry name" value="Enolase_CS"/>
</dbReference>
<dbReference type="InterPro" id="IPR020811">
    <property type="entry name" value="Enolase_N"/>
</dbReference>
<dbReference type="NCBIfam" id="TIGR01060">
    <property type="entry name" value="eno"/>
    <property type="match status" value="1"/>
</dbReference>
<dbReference type="PANTHER" id="PTHR11902">
    <property type="entry name" value="ENOLASE"/>
    <property type="match status" value="1"/>
</dbReference>
<dbReference type="PANTHER" id="PTHR11902:SF1">
    <property type="entry name" value="ENOLASE"/>
    <property type="match status" value="1"/>
</dbReference>
<dbReference type="Pfam" id="PF00113">
    <property type="entry name" value="Enolase_C"/>
    <property type="match status" value="1"/>
</dbReference>
<dbReference type="Pfam" id="PF03952">
    <property type="entry name" value="Enolase_N"/>
    <property type="match status" value="1"/>
</dbReference>
<dbReference type="PIRSF" id="PIRSF001400">
    <property type="entry name" value="Enolase"/>
    <property type="match status" value="1"/>
</dbReference>
<dbReference type="PRINTS" id="PR00148">
    <property type="entry name" value="ENOLASE"/>
</dbReference>
<dbReference type="SFLD" id="SFLDF00002">
    <property type="entry name" value="enolase"/>
    <property type="match status" value="1"/>
</dbReference>
<dbReference type="SFLD" id="SFLDG00178">
    <property type="entry name" value="enolase"/>
    <property type="match status" value="1"/>
</dbReference>
<dbReference type="SMART" id="SM01192">
    <property type="entry name" value="Enolase_C"/>
    <property type="match status" value="1"/>
</dbReference>
<dbReference type="SMART" id="SM01193">
    <property type="entry name" value="Enolase_N"/>
    <property type="match status" value="1"/>
</dbReference>
<dbReference type="SUPFAM" id="SSF51604">
    <property type="entry name" value="Enolase C-terminal domain-like"/>
    <property type="match status" value="1"/>
</dbReference>
<dbReference type="SUPFAM" id="SSF54826">
    <property type="entry name" value="Enolase N-terminal domain-like"/>
    <property type="match status" value="1"/>
</dbReference>
<dbReference type="PROSITE" id="PS00164">
    <property type="entry name" value="ENOLASE"/>
    <property type="match status" value="1"/>
</dbReference>
<reference key="1">
    <citation type="submission" date="2008-06" db="EMBL/GenBank/DDBJ databases">
        <title>Complete sequence of Stenotrophomonas maltophilia R551-3.</title>
        <authorList>
            <consortium name="US DOE Joint Genome Institute"/>
            <person name="Lucas S."/>
            <person name="Copeland A."/>
            <person name="Lapidus A."/>
            <person name="Glavina del Rio T."/>
            <person name="Dalin E."/>
            <person name="Tice H."/>
            <person name="Pitluck S."/>
            <person name="Chain P."/>
            <person name="Malfatti S."/>
            <person name="Shin M."/>
            <person name="Vergez L."/>
            <person name="Lang D."/>
            <person name="Schmutz J."/>
            <person name="Larimer F."/>
            <person name="Land M."/>
            <person name="Hauser L."/>
            <person name="Kyrpides N."/>
            <person name="Mikhailova N."/>
            <person name="Taghavi S."/>
            <person name="Monchy S."/>
            <person name="Newman L."/>
            <person name="Vangronsveld J."/>
            <person name="van der Lelie D."/>
            <person name="Richardson P."/>
        </authorList>
    </citation>
    <scope>NUCLEOTIDE SEQUENCE [LARGE SCALE GENOMIC DNA]</scope>
    <source>
        <strain>R551-3</strain>
    </source>
</reference>
<organism>
    <name type="scientific">Stenotrophomonas maltophilia (strain R551-3)</name>
    <dbReference type="NCBI Taxonomy" id="391008"/>
    <lineage>
        <taxon>Bacteria</taxon>
        <taxon>Pseudomonadati</taxon>
        <taxon>Pseudomonadota</taxon>
        <taxon>Gammaproteobacteria</taxon>
        <taxon>Lysobacterales</taxon>
        <taxon>Lysobacteraceae</taxon>
        <taxon>Stenotrophomonas</taxon>
        <taxon>Stenotrophomonas maltophilia group</taxon>
    </lineage>
</organism>
<accession>B4SR86</accession>
<proteinExistence type="inferred from homology"/>
<sequence>MSTIRSIHAREILDSRGNPTLEAEVTLEDGSFGRAAVPSGASTGTKEAVELRDGDKTRYLGKGVRKAVDNVNTTIANALKGVEASDQEGLDRRLIDLDGTENKGRLGANALLGVSMAAAHAAAASSKQALWQYLAAKTGVTPSLPVPMMNIINGGAHADNNVDFQEFMVLPVGFTSFSEALRAGTEIFHSLKSVLKGHGLSTAVGDEGGFAPDFRSNVEALDTILEAIGKAGYTAGEDVLLGLDVASSEFFENGKYNLVGENKRLTSEQFVDFLADWAAQYPIITIEDGLAENDWAGWKLLTDRIGKKVQLVGDDLFVTNPKIFQEGIDSGTANAILIKVNQIGTLSETLEAIAMADRAGYAAVVSHRSGETEDTTIADISVATTATQIKTGSLCRSDRVAKYNQLLRIEEALGAGARYAGRDAFVSLKR</sequence>
<keyword id="KW-0963">Cytoplasm</keyword>
<keyword id="KW-0324">Glycolysis</keyword>
<keyword id="KW-0456">Lyase</keyword>
<keyword id="KW-0460">Magnesium</keyword>
<keyword id="KW-0479">Metal-binding</keyword>
<keyword id="KW-0964">Secreted</keyword>
<gene>
    <name evidence="1" type="primary">eno</name>
    <name type="ordered locus">Smal_1452</name>
</gene>